<feature type="chain" id="PRO_0000098440" description="Isoleucine--tRNA ligase">
    <location>
        <begin position="1"/>
        <end position="968"/>
    </location>
</feature>
<feature type="short sequence motif" description="'HIGH' region">
    <location>
        <begin position="68"/>
        <end position="78"/>
    </location>
</feature>
<feature type="short sequence motif" description="'KMSKS' region">
    <location>
        <begin position="625"/>
        <end position="629"/>
    </location>
</feature>
<feature type="binding site" evidence="1">
    <location>
        <position position="584"/>
    </location>
    <ligand>
        <name>L-isoleucyl-5'-AMP</name>
        <dbReference type="ChEBI" id="CHEBI:178002"/>
    </ligand>
</feature>
<feature type="binding site" evidence="1">
    <location>
        <position position="628"/>
    </location>
    <ligand>
        <name>ATP</name>
        <dbReference type="ChEBI" id="CHEBI:30616"/>
    </ligand>
</feature>
<feature type="binding site" evidence="1">
    <location>
        <position position="938"/>
    </location>
    <ligand>
        <name>Zn(2+)</name>
        <dbReference type="ChEBI" id="CHEBI:29105"/>
    </ligand>
</feature>
<feature type="binding site" evidence="1">
    <location>
        <position position="941"/>
    </location>
    <ligand>
        <name>Zn(2+)</name>
        <dbReference type="ChEBI" id="CHEBI:29105"/>
    </ligand>
</feature>
<feature type="binding site" evidence="1">
    <location>
        <position position="958"/>
    </location>
    <ligand>
        <name>Zn(2+)</name>
        <dbReference type="ChEBI" id="CHEBI:29105"/>
    </ligand>
</feature>
<feature type="binding site" evidence="1">
    <location>
        <position position="961"/>
    </location>
    <ligand>
        <name>Zn(2+)</name>
        <dbReference type="ChEBI" id="CHEBI:29105"/>
    </ligand>
</feature>
<evidence type="ECO:0000255" key="1">
    <source>
        <dbReference type="HAMAP-Rule" id="MF_02002"/>
    </source>
</evidence>
<comment type="function">
    <text evidence="1">Catalyzes the attachment of isoleucine to tRNA(Ile). As IleRS can inadvertently accommodate and process structurally similar amino acids such as valine, to avoid such errors it has two additional distinct tRNA(Ile)-dependent editing activities. One activity is designated as 'pretransfer' editing and involves the hydrolysis of activated Val-AMP. The other activity is designated 'posttransfer' editing and involves deacylation of mischarged Val-tRNA(Ile).</text>
</comment>
<comment type="catalytic activity">
    <reaction evidence="1">
        <text>tRNA(Ile) + L-isoleucine + ATP = L-isoleucyl-tRNA(Ile) + AMP + diphosphate</text>
        <dbReference type="Rhea" id="RHEA:11060"/>
        <dbReference type="Rhea" id="RHEA-COMP:9666"/>
        <dbReference type="Rhea" id="RHEA-COMP:9695"/>
        <dbReference type="ChEBI" id="CHEBI:30616"/>
        <dbReference type="ChEBI" id="CHEBI:33019"/>
        <dbReference type="ChEBI" id="CHEBI:58045"/>
        <dbReference type="ChEBI" id="CHEBI:78442"/>
        <dbReference type="ChEBI" id="CHEBI:78528"/>
        <dbReference type="ChEBI" id="CHEBI:456215"/>
        <dbReference type="EC" id="6.1.1.5"/>
    </reaction>
</comment>
<comment type="cofactor">
    <cofactor evidence="1">
        <name>Zn(2+)</name>
        <dbReference type="ChEBI" id="CHEBI:29105"/>
    </cofactor>
    <text evidence="1">Binds 1 zinc ion per subunit.</text>
</comment>
<comment type="subunit">
    <text evidence="1">Monomer.</text>
</comment>
<comment type="subcellular location">
    <subcellularLocation>
        <location evidence="1">Cytoplasm</location>
    </subcellularLocation>
</comment>
<comment type="domain">
    <text evidence="1">IleRS has two distinct active sites: one for aminoacylation and one for editing. The misactivated valine is translocated from the active site to the editing site, which sterically excludes the correctly activated isoleucine. The single editing site contains two valyl binding pockets, one specific for each substrate (Val-AMP or Val-tRNA(Ile)).</text>
</comment>
<comment type="similarity">
    <text evidence="1">Belongs to the class-I aminoacyl-tRNA synthetase family. IleS type 1 subfamily.</text>
</comment>
<organism>
    <name type="scientific">Prochlorococcus marinus (strain MIT 9313)</name>
    <dbReference type="NCBI Taxonomy" id="74547"/>
    <lineage>
        <taxon>Bacteria</taxon>
        <taxon>Bacillati</taxon>
        <taxon>Cyanobacteriota</taxon>
        <taxon>Cyanophyceae</taxon>
        <taxon>Synechococcales</taxon>
        <taxon>Prochlorococcaceae</taxon>
        <taxon>Prochlorococcus</taxon>
    </lineage>
</organism>
<keyword id="KW-0030">Aminoacyl-tRNA synthetase</keyword>
<keyword id="KW-0067">ATP-binding</keyword>
<keyword id="KW-0963">Cytoplasm</keyword>
<keyword id="KW-0436">Ligase</keyword>
<keyword id="KW-0479">Metal-binding</keyword>
<keyword id="KW-0547">Nucleotide-binding</keyword>
<keyword id="KW-0648">Protein biosynthesis</keyword>
<keyword id="KW-1185">Reference proteome</keyword>
<keyword id="KW-0862">Zinc</keyword>
<sequence length="968" mass="108894">MTQGKQPDGVARTSYKDTLNLLQTSFGMRANASQREPELQEFWKQQGIDLELGLNNQGQNFTLHDGPPYANGALHMGHALNKVLKDIINKHQILRGRQVRFVPGWDCHGLPIELKVLQNLNQEQREALTPLKLRKKAAAFARKQVDSQMAGFRRWGIWADWEHPYLTLQKEYEAAQIQVFGKMFQKGYIYRGLKPVHWSPSSRTALAEAELEYPDGHTSPSVYVAFPAAKLPEKLRTSLGNQGLELPNNGLELGQALQIAIWTTTPWTLPANLAVSVNEKLDYSFAVDNQGRLLLVAAELLPSLRDTLALELTARATVKGALLAGLIYKHPLLDRDSPIVIGGEYITTESGTGLVHTAPGHGVDDFNTGQKHDLGMLCPVDESGTMTSEAGPFAGLNVLKDANPTIIAALEERGALLKHEPYAHRYPYDWRTKKPTIFRATEQWFASVEGFRNEALTAINSVEWLPASGRNRMEAMVRERGDWCISRQRTWGVPIPVFYEREGNEVLLNDETLAHVKALITEHGADVWWERNEVELLPPAYAAEAERWRKGTDTMDVWFDSGSSWAAVASQQEGLAYPTELYLEGSDQHRGWFQSSLLTSVAINSQAPYRQVLTHGFALDEKGRKMSKSLGNVVDPAVIIDGGKNQKQEPPYGADVLRLWVSSVDYSADVPIGASILRQIADVYRKVRNTSRYLLGNLHDFDPERDAIPVPELPLLDRWMLQRTAEVMDEISTAFDRYEFYRFFQLLQSYCVVDLSNFYLDIAKDRLYVSSPSERRRRSCQTAMALIIERLAGAISPVLCHMAEDIWQNLPYSVAEDSVFRRGWPTVPETWRDPSMMAPMHQLRELRSAVNRVLEDCRSQGELGAALEAAVRLEAHSEALQEALDWLRQQGDPDVDGLRDWLLVSHLQVGGEPWAELLASQDNALATIEVARARGSKCERCWHYETDVGQHTTHPTLCGRCVGVLEHQ</sequence>
<gene>
    <name evidence="1" type="primary">ileS</name>
    <name type="ordered locus">PMT_1817</name>
</gene>
<proteinExistence type="inferred from homology"/>
<reference key="1">
    <citation type="journal article" date="2003" name="Nature">
        <title>Genome divergence in two Prochlorococcus ecotypes reflects oceanic niche differentiation.</title>
        <authorList>
            <person name="Rocap G."/>
            <person name="Larimer F.W."/>
            <person name="Lamerdin J.E."/>
            <person name="Malfatti S."/>
            <person name="Chain P."/>
            <person name="Ahlgren N.A."/>
            <person name="Arellano A."/>
            <person name="Coleman M."/>
            <person name="Hauser L."/>
            <person name="Hess W.R."/>
            <person name="Johnson Z.I."/>
            <person name="Land M.L."/>
            <person name="Lindell D."/>
            <person name="Post A.F."/>
            <person name="Regala W."/>
            <person name="Shah M."/>
            <person name="Shaw S.L."/>
            <person name="Steglich C."/>
            <person name="Sullivan M.B."/>
            <person name="Ting C.S."/>
            <person name="Tolonen A."/>
            <person name="Webb E.A."/>
            <person name="Zinser E.R."/>
            <person name="Chisholm S.W."/>
        </authorList>
    </citation>
    <scope>NUCLEOTIDE SEQUENCE [LARGE SCALE GENOMIC DNA]</scope>
    <source>
        <strain>MIT 9313</strain>
    </source>
</reference>
<name>SYI_PROMM</name>
<dbReference type="EC" id="6.1.1.5" evidence="1"/>
<dbReference type="EMBL" id="BX548175">
    <property type="protein sequence ID" value="CAE21992.1"/>
    <property type="molecule type" value="Genomic_DNA"/>
</dbReference>
<dbReference type="RefSeq" id="WP_011131184.1">
    <property type="nucleotide sequence ID" value="NC_005071.1"/>
</dbReference>
<dbReference type="SMR" id="Q7TUN3"/>
<dbReference type="KEGG" id="pmt:PMT_1817"/>
<dbReference type="eggNOG" id="COG0060">
    <property type="taxonomic scope" value="Bacteria"/>
</dbReference>
<dbReference type="HOGENOM" id="CLU_001493_7_1_3"/>
<dbReference type="OrthoDB" id="9810365at2"/>
<dbReference type="Proteomes" id="UP000001423">
    <property type="component" value="Chromosome"/>
</dbReference>
<dbReference type="GO" id="GO:0005737">
    <property type="term" value="C:cytoplasm"/>
    <property type="evidence" value="ECO:0007669"/>
    <property type="project" value="UniProtKB-SubCell"/>
</dbReference>
<dbReference type="GO" id="GO:0002161">
    <property type="term" value="F:aminoacyl-tRNA deacylase activity"/>
    <property type="evidence" value="ECO:0007669"/>
    <property type="project" value="InterPro"/>
</dbReference>
<dbReference type="GO" id="GO:0005524">
    <property type="term" value="F:ATP binding"/>
    <property type="evidence" value="ECO:0007669"/>
    <property type="project" value="UniProtKB-UniRule"/>
</dbReference>
<dbReference type="GO" id="GO:0004822">
    <property type="term" value="F:isoleucine-tRNA ligase activity"/>
    <property type="evidence" value="ECO:0007669"/>
    <property type="project" value="UniProtKB-UniRule"/>
</dbReference>
<dbReference type="GO" id="GO:0000049">
    <property type="term" value="F:tRNA binding"/>
    <property type="evidence" value="ECO:0007669"/>
    <property type="project" value="InterPro"/>
</dbReference>
<dbReference type="GO" id="GO:0008270">
    <property type="term" value="F:zinc ion binding"/>
    <property type="evidence" value="ECO:0007669"/>
    <property type="project" value="UniProtKB-UniRule"/>
</dbReference>
<dbReference type="GO" id="GO:0006428">
    <property type="term" value="P:isoleucyl-tRNA aminoacylation"/>
    <property type="evidence" value="ECO:0007669"/>
    <property type="project" value="UniProtKB-UniRule"/>
</dbReference>
<dbReference type="CDD" id="cd07960">
    <property type="entry name" value="Anticodon_Ia_Ile_BEm"/>
    <property type="match status" value="1"/>
</dbReference>
<dbReference type="FunFam" id="1.10.730.20:FF:000001">
    <property type="entry name" value="Isoleucine--tRNA ligase"/>
    <property type="match status" value="1"/>
</dbReference>
<dbReference type="FunFam" id="3.40.50.620:FF:000111">
    <property type="entry name" value="Mitochondrial isoleucyl-tRNA synthetase"/>
    <property type="match status" value="1"/>
</dbReference>
<dbReference type="Gene3D" id="1.10.730.20">
    <property type="match status" value="1"/>
</dbReference>
<dbReference type="Gene3D" id="3.40.50.620">
    <property type="entry name" value="HUPs"/>
    <property type="match status" value="2"/>
</dbReference>
<dbReference type="Gene3D" id="1.10.10.830">
    <property type="entry name" value="Ile-tRNA synthetase CP2 domain-like"/>
    <property type="match status" value="1"/>
</dbReference>
<dbReference type="Gene3D" id="3.90.740.10">
    <property type="entry name" value="Valyl/Leucyl/Isoleucyl-tRNA synthetase, editing domain"/>
    <property type="match status" value="1"/>
</dbReference>
<dbReference type="HAMAP" id="MF_02002">
    <property type="entry name" value="Ile_tRNA_synth_type1"/>
    <property type="match status" value="1"/>
</dbReference>
<dbReference type="InterPro" id="IPR001412">
    <property type="entry name" value="aa-tRNA-synth_I_CS"/>
</dbReference>
<dbReference type="InterPro" id="IPR002300">
    <property type="entry name" value="aa-tRNA-synth_Ia"/>
</dbReference>
<dbReference type="InterPro" id="IPR033708">
    <property type="entry name" value="Anticodon_Ile_BEm"/>
</dbReference>
<dbReference type="InterPro" id="IPR002301">
    <property type="entry name" value="Ile-tRNA-ligase"/>
</dbReference>
<dbReference type="InterPro" id="IPR023585">
    <property type="entry name" value="Ile-tRNA-ligase_type1"/>
</dbReference>
<dbReference type="InterPro" id="IPR050081">
    <property type="entry name" value="Ile-tRNA_ligase"/>
</dbReference>
<dbReference type="InterPro" id="IPR013155">
    <property type="entry name" value="M/V/L/I-tRNA-synth_anticd-bd"/>
</dbReference>
<dbReference type="InterPro" id="IPR014729">
    <property type="entry name" value="Rossmann-like_a/b/a_fold"/>
</dbReference>
<dbReference type="InterPro" id="IPR009080">
    <property type="entry name" value="tRNAsynth_Ia_anticodon-bd"/>
</dbReference>
<dbReference type="InterPro" id="IPR009008">
    <property type="entry name" value="Val/Leu/Ile-tRNA-synth_edit"/>
</dbReference>
<dbReference type="InterPro" id="IPR010663">
    <property type="entry name" value="Znf_FPG/IleRS"/>
</dbReference>
<dbReference type="NCBIfam" id="TIGR00392">
    <property type="entry name" value="ileS"/>
    <property type="match status" value="1"/>
</dbReference>
<dbReference type="PANTHER" id="PTHR42765:SF1">
    <property type="entry name" value="ISOLEUCINE--TRNA LIGASE, MITOCHONDRIAL"/>
    <property type="match status" value="1"/>
</dbReference>
<dbReference type="PANTHER" id="PTHR42765">
    <property type="entry name" value="SOLEUCYL-TRNA SYNTHETASE"/>
    <property type="match status" value="1"/>
</dbReference>
<dbReference type="Pfam" id="PF08264">
    <property type="entry name" value="Anticodon_1"/>
    <property type="match status" value="1"/>
</dbReference>
<dbReference type="Pfam" id="PF00133">
    <property type="entry name" value="tRNA-synt_1"/>
    <property type="match status" value="1"/>
</dbReference>
<dbReference type="Pfam" id="PF06827">
    <property type="entry name" value="zf-FPG_IleRS"/>
    <property type="match status" value="1"/>
</dbReference>
<dbReference type="PRINTS" id="PR00984">
    <property type="entry name" value="TRNASYNTHILE"/>
</dbReference>
<dbReference type="SUPFAM" id="SSF47323">
    <property type="entry name" value="Anticodon-binding domain of a subclass of class I aminoacyl-tRNA synthetases"/>
    <property type="match status" value="1"/>
</dbReference>
<dbReference type="SUPFAM" id="SSF52374">
    <property type="entry name" value="Nucleotidylyl transferase"/>
    <property type="match status" value="1"/>
</dbReference>
<dbReference type="SUPFAM" id="SSF50677">
    <property type="entry name" value="ValRS/IleRS/LeuRS editing domain"/>
    <property type="match status" value="1"/>
</dbReference>
<dbReference type="PROSITE" id="PS00178">
    <property type="entry name" value="AA_TRNA_LIGASE_I"/>
    <property type="match status" value="1"/>
</dbReference>
<accession>Q7TUN3</accession>
<protein>
    <recommendedName>
        <fullName evidence="1">Isoleucine--tRNA ligase</fullName>
        <ecNumber evidence="1">6.1.1.5</ecNumber>
    </recommendedName>
    <alternativeName>
        <fullName evidence="1">Isoleucyl-tRNA synthetase</fullName>
        <shortName evidence="1">IleRS</shortName>
    </alternativeName>
</protein>